<evidence type="ECO:0000250" key="1"/>
<evidence type="ECO:0000305" key="2"/>
<comment type="function">
    <text evidence="1">Putative oxophytodienoate reductase that may be involved in the biosynthesis or metabolism of oxylipin signaling molecules.</text>
</comment>
<comment type="cofactor">
    <cofactor>
        <name>FMN</name>
        <dbReference type="ChEBI" id="CHEBI:58210"/>
    </cofactor>
</comment>
<comment type="similarity">
    <text evidence="2">Belongs to the NADH:flavin oxidoreductase/NADH oxidase family.</text>
</comment>
<protein>
    <recommendedName>
        <fullName>Putative 12-oxophytodienoate reductase 13</fullName>
        <ecNumber>1.3.1.-</ecNumber>
    </recommendedName>
    <alternativeName>
        <fullName>OPDA-reductase 13</fullName>
        <shortName>OsOPR13</shortName>
    </alternativeName>
</protein>
<organism>
    <name type="scientific">Oryza sativa subsp. japonica</name>
    <name type="common">Rice</name>
    <dbReference type="NCBI Taxonomy" id="39947"/>
    <lineage>
        <taxon>Eukaryota</taxon>
        <taxon>Viridiplantae</taxon>
        <taxon>Streptophyta</taxon>
        <taxon>Embryophyta</taxon>
        <taxon>Tracheophyta</taxon>
        <taxon>Spermatophyta</taxon>
        <taxon>Magnoliopsida</taxon>
        <taxon>Liliopsida</taxon>
        <taxon>Poales</taxon>
        <taxon>Poaceae</taxon>
        <taxon>BOP clade</taxon>
        <taxon>Oryzoideae</taxon>
        <taxon>Oryzeae</taxon>
        <taxon>Oryzinae</taxon>
        <taxon>Oryza</taxon>
        <taxon>Oryza sativa</taxon>
    </lineage>
</organism>
<accession>B9FFD3</accession>
<accession>A0A0P0WAZ6</accession>
<feature type="chain" id="PRO_0000410719" description="Putative 12-oxophytodienoate reductase 13">
    <location>
        <begin position="1"/>
        <end position="376"/>
    </location>
</feature>
<feature type="binding site" evidence="1">
    <location>
        <begin position="25"/>
        <end position="27"/>
    </location>
    <ligand>
        <name>FMN</name>
        <dbReference type="ChEBI" id="CHEBI:58210"/>
    </ligand>
</feature>
<feature type="binding site" evidence="1">
    <location>
        <position position="58"/>
    </location>
    <ligand>
        <name>FMN</name>
        <dbReference type="ChEBI" id="CHEBI:58210"/>
    </ligand>
</feature>
<feature type="binding site" evidence="1">
    <location>
        <position position="99"/>
    </location>
    <ligand>
        <name>FMN</name>
        <dbReference type="ChEBI" id="CHEBI:58210"/>
    </ligand>
</feature>
<feature type="binding site" evidence="1">
    <location>
        <begin position="165"/>
        <end position="168"/>
    </location>
    <ligand>
        <name>substrate</name>
    </ligand>
</feature>
<feature type="binding site" evidence="1">
    <location>
        <position position="217"/>
    </location>
    <ligand>
        <name>FMN</name>
        <dbReference type="ChEBI" id="CHEBI:58210"/>
    </ligand>
</feature>
<feature type="binding site" evidence="1">
    <location>
        <position position="301"/>
    </location>
    <ligand>
        <name>FMN</name>
        <dbReference type="ChEBI" id="CHEBI:58210"/>
    </ligand>
</feature>
<feature type="binding site" evidence="1">
    <location>
        <begin position="322"/>
        <end position="323"/>
    </location>
    <ligand>
        <name>FMN</name>
        <dbReference type="ChEBI" id="CHEBI:58210"/>
    </ligand>
</feature>
<feature type="sequence conflict" description="In Ref. 5; AK073836." evidence="2" ref="5">
    <original>G</original>
    <variation>D</variation>
    <location>
        <position position="93"/>
    </location>
</feature>
<gene>
    <name type="primary">OPR13</name>
    <name type="synonym">OPR9</name>
    <name type="ordered locus">Os04g0443801</name>
    <name type="ORF">OsJ_14925</name>
</gene>
<name>OPR13_ORYSJ</name>
<proteinExistence type="evidence at transcript level"/>
<reference key="1">
    <citation type="journal article" date="2005" name="Nature">
        <title>The map-based sequence of the rice genome.</title>
        <authorList>
            <consortium name="International rice genome sequencing project (IRGSP)"/>
        </authorList>
    </citation>
    <scope>NUCLEOTIDE SEQUENCE [LARGE SCALE GENOMIC DNA]</scope>
    <source>
        <strain>cv. Nipponbare</strain>
    </source>
</reference>
<reference key="2">
    <citation type="journal article" date="2008" name="Nucleic Acids Res.">
        <title>The rice annotation project database (RAP-DB): 2008 update.</title>
        <authorList>
            <consortium name="The rice annotation project (RAP)"/>
        </authorList>
    </citation>
    <scope>GENOME REANNOTATION</scope>
    <source>
        <strain>cv. Nipponbare</strain>
    </source>
</reference>
<reference key="3">
    <citation type="journal article" date="2013" name="Rice">
        <title>Improvement of the Oryza sativa Nipponbare reference genome using next generation sequence and optical map data.</title>
        <authorList>
            <person name="Kawahara Y."/>
            <person name="de la Bastide M."/>
            <person name="Hamilton J.P."/>
            <person name="Kanamori H."/>
            <person name="McCombie W.R."/>
            <person name="Ouyang S."/>
            <person name="Schwartz D.C."/>
            <person name="Tanaka T."/>
            <person name="Wu J."/>
            <person name="Zhou S."/>
            <person name="Childs K.L."/>
            <person name="Davidson R.M."/>
            <person name="Lin H."/>
            <person name="Quesada-Ocampo L."/>
            <person name="Vaillancourt B."/>
            <person name="Sakai H."/>
            <person name="Lee S.S."/>
            <person name="Kim J."/>
            <person name="Numa H."/>
            <person name="Itoh T."/>
            <person name="Buell C.R."/>
            <person name="Matsumoto T."/>
        </authorList>
    </citation>
    <scope>GENOME REANNOTATION</scope>
    <source>
        <strain>cv. Nipponbare</strain>
    </source>
</reference>
<reference key="4">
    <citation type="journal article" date="2005" name="PLoS Biol.">
        <title>The genomes of Oryza sativa: a history of duplications.</title>
        <authorList>
            <person name="Yu J."/>
            <person name="Wang J."/>
            <person name="Lin W."/>
            <person name="Li S."/>
            <person name="Li H."/>
            <person name="Zhou J."/>
            <person name="Ni P."/>
            <person name="Dong W."/>
            <person name="Hu S."/>
            <person name="Zeng C."/>
            <person name="Zhang J."/>
            <person name="Zhang Y."/>
            <person name="Li R."/>
            <person name="Xu Z."/>
            <person name="Li S."/>
            <person name="Li X."/>
            <person name="Zheng H."/>
            <person name="Cong L."/>
            <person name="Lin L."/>
            <person name="Yin J."/>
            <person name="Geng J."/>
            <person name="Li G."/>
            <person name="Shi J."/>
            <person name="Liu J."/>
            <person name="Lv H."/>
            <person name="Li J."/>
            <person name="Wang J."/>
            <person name="Deng Y."/>
            <person name="Ran L."/>
            <person name="Shi X."/>
            <person name="Wang X."/>
            <person name="Wu Q."/>
            <person name="Li C."/>
            <person name="Ren X."/>
            <person name="Wang J."/>
            <person name="Wang X."/>
            <person name="Li D."/>
            <person name="Liu D."/>
            <person name="Zhang X."/>
            <person name="Ji Z."/>
            <person name="Zhao W."/>
            <person name="Sun Y."/>
            <person name="Zhang Z."/>
            <person name="Bao J."/>
            <person name="Han Y."/>
            <person name="Dong L."/>
            <person name="Ji J."/>
            <person name="Chen P."/>
            <person name="Wu S."/>
            <person name="Liu J."/>
            <person name="Xiao Y."/>
            <person name="Bu D."/>
            <person name="Tan J."/>
            <person name="Yang L."/>
            <person name="Ye C."/>
            <person name="Zhang J."/>
            <person name="Xu J."/>
            <person name="Zhou Y."/>
            <person name="Yu Y."/>
            <person name="Zhang B."/>
            <person name="Zhuang S."/>
            <person name="Wei H."/>
            <person name="Liu B."/>
            <person name="Lei M."/>
            <person name="Yu H."/>
            <person name="Li Y."/>
            <person name="Xu H."/>
            <person name="Wei S."/>
            <person name="He X."/>
            <person name="Fang L."/>
            <person name="Zhang Z."/>
            <person name="Zhang Y."/>
            <person name="Huang X."/>
            <person name="Su Z."/>
            <person name="Tong W."/>
            <person name="Li J."/>
            <person name="Tong Z."/>
            <person name="Li S."/>
            <person name="Ye J."/>
            <person name="Wang L."/>
            <person name="Fang L."/>
            <person name="Lei T."/>
            <person name="Chen C.-S."/>
            <person name="Chen H.-C."/>
            <person name="Xu Z."/>
            <person name="Li H."/>
            <person name="Huang H."/>
            <person name="Zhang F."/>
            <person name="Xu H."/>
            <person name="Li N."/>
            <person name="Zhao C."/>
            <person name="Li S."/>
            <person name="Dong L."/>
            <person name="Huang Y."/>
            <person name="Li L."/>
            <person name="Xi Y."/>
            <person name="Qi Q."/>
            <person name="Li W."/>
            <person name="Zhang B."/>
            <person name="Hu W."/>
            <person name="Zhang Y."/>
            <person name="Tian X."/>
            <person name="Jiao Y."/>
            <person name="Liang X."/>
            <person name="Jin J."/>
            <person name="Gao L."/>
            <person name="Zheng W."/>
            <person name="Hao B."/>
            <person name="Liu S.-M."/>
            <person name="Wang W."/>
            <person name="Yuan L."/>
            <person name="Cao M."/>
            <person name="McDermott J."/>
            <person name="Samudrala R."/>
            <person name="Wang J."/>
            <person name="Wong G.K.-S."/>
            <person name="Yang H."/>
        </authorList>
    </citation>
    <scope>NUCLEOTIDE SEQUENCE [LARGE SCALE GENOMIC DNA]</scope>
    <source>
        <strain>cv. Nipponbare</strain>
    </source>
</reference>
<reference key="5">
    <citation type="journal article" date="2003" name="Science">
        <title>Collection, mapping, and annotation of over 28,000 cDNA clones from japonica rice.</title>
        <authorList>
            <consortium name="The rice full-length cDNA consortium"/>
        </authorList>
    </citation>
    <scope>NUCLEOTIDE SEQUENCE [LARGE SCALE MRNA]</scope>
    <source>
        <strain>cv. Nipponbare</strain>
    </source>
</reference>
<keyword id="KW-0275">Fatty acid biosynthesis</keyword>
<keyword id="KW-0276">Fatty acid metabolism</keyword>
<keyword id="KW-0285">Flavoprotein</keyword>
<keyword id="KW-0288">FMN</keyword>
<keyword id="KW-0444">Lipid biosynthesis</keyword>
<keyword id="KW-0443">Lipid metabolism</keyword>
<keyword id="KW-0521">NADP</keyword>
<keyword id="KW-0560">Oxidoreductase</keyword>
<keyword id="KW-0925">Oxylipin biosynthesis</keyword>
<keyword id="KW-1185">Reference proteome</keyword>
<dbReference type="EC" id="1.3.1.-"/>
<dbReference type="EMBL" id="AP008210">
    <property type="status" value="NOT_ANNOTATED_CDS"/>
    <property type="molecule type" value="Genomic_DNA"/>
</dbReference>
<dbReference type="EMBL" id="AP014960">
    <property type="protein sequence ID" value="BAS89368.1"/>
    <property type="molecule type" value="Genomic_DNA"/>
</dbReference>
<dbReference type="EMBL" id="CM000141">
    <property type="protein sequence ID" value="EEE61067.1"/>
    <property type="molecule type" value="Genomic_DNA"/>
</dbReference>
<dbReference type="EMBL" id="AK073836">
    <property type="status" value="NOT_ANNOTATED_CDS"/>
    <property type="molecule type" value="mRNA"/>
</dbReference>
<dbReference type="RefSeq" id="XP_015620839.1">
    <property type="nucleotide sequence ID" value="XM_015765353.1"/>
</dbReference>
<dbReference type="RefSeq" id="XP_015620840.1">
    <property type="nucleotide sequence ID" value="XM_015765354.1"/>
</dbReference>
<dbReference type="RefSeq" id="XP_015637023.1">
    <property type="nucleotide sequence ID" value="XM_015781537.1"/>
</dbReference>
<dbReference type="SMR" id="B9FFD3"/>
<dbReference type="FunCoup" id="B9FFD3">
    <property type="interactions" value="150"/>
</dbReference>
<dbReference type="STRING" id="39947.B9FFD3"/>
<dbReference type="PaxDb" id="39947-B9FFD3"/>
<dbReference type="EnsemblPlants" id="Os04t0443801-02">
    <property type="protein sequence ID" value="Os04t0443801-02"/>
    <property type="gene ID" value="Os04g0443801"/>
</dbReference>
<dbReference type="EnsemblPlants" id="Os04t0443801-03">
    <property type="protein sequence ID" value="Os04t0443801-03"/>
    <property type="gene ID" value="Os04g0443801"/>
</dbReference>
<dbReference type="Gramene" id="Os04t0443801-02">
    <property type="protein sequence ID" value="Os04t0443801-02"/>
    <property type="gene ID" value="Os04g0443801"/>
</dbReference>
<dbReference type="Gramene" id="Os04t0443801-03">
    <property type="protein sequence ID" value="Os04t0443801-03"/>
    <property type="gene ID" value="Os04g0443801"/>
</dbReference>
<dbReference type="eggNOG" id="KOG0134">
    <property type="taxonomic scope" value="Eukaryota"/>
</dbReference>
<dbReference type="HOGENOM" id="CLU_012153_0_2_1"/>
<dbReference type="InParanoid" id="B9FFD3"/>
<dbReference type="OMA" id="WAAYDLM"/>
<dbReference type="OrthoDB" id="276546at2759"/>
<dbReference type="Proteomes" id="UP000000763">
    <property type="component" value="Chromosome 4"/>
</dbReference>
<dbReference type="Proteomes" id="UP000007752">
    <property type="component" value="Chromosome 4"/>
</dbReference>
<dbReference type="Proteomes" id="UP000059680">
    <property type="component" value="Chromosome 4"/>
</dbReference>
<dbReference type="ExpressionAtlas" id="B9FFD3">
    <property type="expression patterns" value="baseline and differential"/>
</dbReference>
<dbReference type="GO" id="GO:0010181">
    <property type="term" value="F:FMN binding"/>
    <property type="evidence" value="ECO:0007669"/>
    <property type="project" value="InterPro"/>
</dbReference>
<dbReference type="GO" id="GO:0016491">
    <property type="term" value="F:oxidoreductase activity"/>
    <property type="evidence" value="ECO:0000318"/>
    <property type="project" value="GO_Central"/>
</dbReference>
<dbReference type="GO" id="GO:0006633">
    <property type="term" value="P:fatty acid biosynthetic process"/>
    <property type="evidence" value="ECO:0007669"/>
    <property type="project" value="UniProtKB-KW"/>
</dbReference>
<dbReference type="GO" id="GO:0031408">
    <property type="term" value="P:oxylipin biosynthetic process"/>
    <property type="evidence" value="ECO:0007669"/>
    <property type="project" value="UniProtKB-KW"/>
</dbReference>
<dbReference type="CDD" id="cd02933">
    <property type="entry name" value="OYE_like_FMN"/>
    <property type="match status" value="1"/>
</dbReference>
<dbReference type="FunFam" id="3.20.20.70:FF:000073">
    <property type="entry name" value="12-oxophytodienoate reductase 3"/>
    <property type="match status" value="1"/>
</dbReference>
<dbReference type="Gene3D" id="3.20.20.70">
    <property type="entry name" value="Aldolase class I"/>
    <property type="match status" value="1"/>
</dbReference>
<dbReference type="InterPro" id="IPR013785">
    <property type="entry name" value="Aldolase_TIM"/>
</dbReference>
<dbReference type="InterPro" id="IPR001155">
    <property type="entry name" value="OxRdtase_FMN_N"/>
</dbReference>
<dbReference type="InterPro" id="IPR045247">
    <property type="entry name" value="Oye-like"/>
</dbReference>
<dbReference type="PANTHER" id="PTHR22893:SF113">
    <property type="entry name" value="12-OXOPHYTODIENOATE REDUCTASE 13-RELATED"/>
    <property type="match status" value="1"/>
</dbReference>
<dbReference type="PANTHER" id="PTHR22893">
    <property type="entry name" value="NADH OXIDOREDUCTASE-RELATED"/>
    <property type="match status" value="1"/>
</dbReference>
<dbReference type="Pfam" id="PF00724">
    <property type="entry name" value="Oxidored_FMN"/>
    <property type="match status" value="1"/>
</dbReference>
<dbReference type="SUPFAM" id="SSF51395">
    <property type="entry name" value="FMN-linked oxidoreductases"/>
    <property type="match status" value="1"/>
</dbReference>
<sequence>MDPVPLFNPCEMGRFTFSHRIVLAPLTRARSYGNLPQSHAILYYSQRATKGGLLISEATGVSSDAPCTNTPGIWTKEQVEAWKPVVDAVHAKGGIFFCQIWHVGRASDLEQEPISSTDKPVEKNEDMDFPVPRRLAVEEIPDVINHFRIAARNAIDAGFDGVEVHGAHGFLLEQFMKDGVNDRADEYGGSLQNRCRFALEVIDAVSTEVGPDRVGFRISPYISYYGCHDSDPDALGVYMARELDRRGVLYCSAVEPEMVAATTVVDGETTTTTMSRRMMIPHRLHGMREAFRRGMFMVGGGYDRDAGNMAVASGYADMVVFGRLFLANPDLPRRFQLDAPLNKYDRATFYTHDPVVGYTDYPFLDDDREAMSDHTG</sequence>